<evidence type="ECO:0000255" key="1">
    <source>
        <dbReference type="HAMAP-Rule" id="MF_00508"/>
    </source>
</evidence>
<evidence type="ECO:0000305" key="2"/>
<gene>
    <name evidence="1" type="primary">rpsJ</name>
    <name type="ordered locus">YPN_3860</name>
    <name type="ORF">YP516_4383</name>
</gene>
<keyword id="KW-0687">Ribonucleoprotein</keyword>
<keyword id="KW-0689">Ribosomal protein</keyword>
<accession>Q1CCU3</accession>
<accession>D1Q2M2</accession>
<name>RS10_YERPN</name>
<comment type="function">
    <text evidence="1">Involved in the binding of tRNA to the ribosomes.</text>
</comment>
<comment type="subunit">
    <text evidence="1">Part of the 30S ribosomal subunit.</text>
</comment>
<comment type="similarity">
    <text evidence="1">Belongs to the universal ribosomal protein uS10 family.</text>
</comment>
<sequence length="103" mass="11767">MQNQRIRIRLKAFDHRLIDQSTAEIVETAKRTGAQVRGPIPLPTRKERFTVLISPHVNKDARDQYEIRTHKRLVDIVEPTEKTVDALMRLDLAAGVDVQISLG</sequence>
<feature type="chain" id="PRO_0000258580" description="Small ribosomal subunit protein uS10">
    <location>
        <begin position="1"/>
        <end position="103"/>
    </location>
</feature>
<protein>
    <recommendedName>
        <fullName evidence="1">Small ribosomal subunit protein uS10</fullName>
    </recommendedName>
    <alternativeName>
        <fullName evidence="2">30S ribosomal protein S10</fullName>
    </alternativeName>
</protein>
<proteinExistence type="inferred from homology"/>
<reference key="1">
    <citation type="journal article" date="2006" name="J. Bacteriol.">
        <title>Complete genome sequence of Yersinia pestis strains Antiqua and Nepal516: evidence of gene reduction in an emerging pathogen.</title>
        <authorList>
            <person name="Chain P.S.G."/>
            <person name="Hu P."/>
            <person name="Malfatti S.A."/>
            <person name="Radnedge L."/>
            <person name="Larimer F."/>
            <person name="Vergez L.M."/>
            <person name="Worsham P."/>
            <person name="Chu M.C."/>
            <person name="Andersen G.L."/>
        </authorList>
    </citation>
    <scope>NUCLEOTIDE SEQUENCE [LARGE SCALE GENOMIC DNA]</scope>
    <source>
        <strain>Nepal516</strain>
    </source>
</reference>
<reference key="2">
    <citation type="submission" date="2009-04" db="EMBL/GenBank/DDBJ databases">
        <title>Yersinia pestis Nepal516A whole genome shotgun sequencing project.</title>
        <authorList>
            <person name="Plunkett G. III"/>
            <person name="Anderson B.D."/>
            <person name="Baumler D.J."/>
            <person name="Burland V."/>
            <person name="Cabot E.L."/>
            <person name="Glasner J.D."/>
            <person name="Mau B."/>
            <person name="Neeno-Eckwall E."/>
            <person name="Perna N.T."/>
            <person name="Munk A.C."/>
            <person name="Tapia R."/>
            <person name="Green L.D."/>
            <person name="Rogers Y.C."/>
            <person name="Detter J.C."/>
            <person name="Bruce D.C."/>
            <person name="Brettin T.S."/>
        </authorList>
    </citation>
    <scope>NUCLEOTIDE SEQUENCE [LARGE SCALE GENOMIC DNA]</scope>
    <source>
        <strain>Nepal516</strain>
    </source>
</reference>
<organism>
    <name type="scientific">Yersinia pestis bv. Antiqua (strain Nepal516)</name>
    <dbReference type="NCBI Taxonomy" id="377628"/>
    <lineage>
        <taxon>Bacteria</taxon>
        <taxon>Pseudomonadati</taxon>
        <taxon>Pseudomonadota</taxon>
        <taxon>Gammaproteobacteria</taxon>
        <taxon>Enterobacterales</taxon>
        <taxon>Yersiniaceae</taxon>
        <taxon>Yersinia</taxon>
    </lineage>
</organism>
<dbReference type="EMBL" id="CP000305">
    <property type="protein sequence ID" value="ABG20187.1"/>
    <property type="molecule type" value="Genomic_DNA"/>
</dbReference>
<dbReference type="EMBL" id="ACNQ01000019">
    <property type="protein sequence ID" value="EEO74775.1"/>
    <property type="molecule type" value="Genomic_DNA"/>
</dbReference>
<dbReference type="RefSeq" id="WP_001181005.1">
    <property type="nucleotide sequence ID" value="NZ_ACNQ01000019.1"/>
</dbReference>
<dbReference type="SMR" id="Q1CCU3"/>
<dbReference type="GeneID" id="98390443"/>
<dbReference type="KEGG" id="ypn:YPN_3860"/>
<dbReference type="HOGENOM" id="CLU_122625_1_3_6"/>
<dbReference type="Proteomes" id="UP000008936">
    <property type="component" value="Chromosome"/>
</dbReference>
<dbReference type="GO" id="GO:1990904">
    <property type="term" value="C:ribonucleoprotein complex"/>
    <property type="evidence" value="ECO:0007669"/>
    <property type="project" value="UniProtKB-KW"/>
</dbReference>
<dbReference type="GO" id="GO:0005840">
    <property type="term" value="C:ribosome"/>
    <property type="evidence" value="ECO:0007669"/>
    <property type="project" value="UniProtKB-KW"/>
</dbReference>
<dbReference type="GO" id="GO:0003735">
    <property type="term" value="F:structural constituent of ribosome"/>
    <property type="evidence" value="ECO:0007669"/>
    <property type="project" value="InterPro"/>
</dbReference>
<dbReference type="GO" id="GO:0000049">
    <property type="term" value="F:tRNA binding"/>
    <property type="evidence" value="ECO:0007669"/>
    <property type="project" value="UniProtKB-UniRule"/>
</dbReference>
<dbReference type="GO" id="GO:0006412">
    <property type="term" value="P:translation"/>
    <property type="evidence" value="ECO:0007669"/>
    <property type="project" value="UniProtKB-UniRule"/>
</dbReference>
<dbReference type="FunFam" id="3.30.70.600:FF:000001">
    <property type="entry name" value="30S ribosomal protein S10"/>
    <property type="match status" value="1"/>
</dbReference>
<dbReference type="Gene3D" id="3.30.70.600">
    <property type="entry name" value="Ribosomal protein S10 domain"/>
    <property type="match status" value="1"/>
</dbReference>
<dbReference type="HAMAP" id="MF_00508">
    <property type="entry name" value="Ribosomal_uS10"/>
    <property type="match status" value="1"/>
</dbReference>
<dbReference type="InterPro" id="IPR001848">
    <property type="entry name" value="Ribosomal_uS10"/>
</dbReference>
<dbReference type="InterPro" id="IPR018268">
    <property type="entry name" value="Ribosomal_uS10_CS"/>
</dbReference>
<dbReference type="InterPro" id="IPR027486">
    <property type="entry name" value="Ribosomal_uS10_dom"/>
</dbReference>
<dbReference type="InterPro" id="IPR036838">
    <property type="entry name" value="Ribosomal_uS10_dom_sf"/>
</dbReference>
<dbReference type="NCBIfam" id="NF001861">
    <property type="entry name" value="PRK00596.1"/>
    <property type="match status" value="1"/>
</dbReference>
<dbReference type="NCBIfam" id="TIGR01049">
    <property type="entry name" value="rpsJ_bact"/>
    <property type="match status" value="1"/>
</dbReference>
<dbReference type="PANTHER" id="PTHR11700">
    <property type="entry name" value="30S RIBOSOMAL PROTEIN S10 FAMILY MEMBER"/>
    <property type="match status" value="1"/>
</dbReference>
<dbReference type="Pfam" id="PF00338">
    <property type="entry name" value="Ribosomal_S10"/>
    <property type="match status" value="1"/>
</dbReference>
<dbReference type="PRINTS" id="PR00971">
    <property type="entry name" value="RIBOSOMALS10"/>
</dbReference>
<dbReference type="SMART" id="SM01403">
    <property type="entry name" value="Ribosomal_S10"/>
    <property type="match status" value="1"/>
</dbReference>
<dbReference type="SUPFAM" id="SSF54999">
    <property type="entry name" value="Ribosomal protein S10"/>
    <property type="match status" value="1"/>
</dbReference>
<dbReference type="PROSITE" id="PS00361">
    <property type="entry name" value="RIBOSOMAL_S10"/>
    <property type="match status" value="1"/>
</dbReference>